<name>BG5_ARATH</name>
<dbReference type="EC" id="3.2.1.39" evidence="7"/>
<dbReference type="EMBL" id="X79694">
    <property type="protein sequence ID" value="CAA56135.1"/>
    <property type="molecule type" value="Genomic_DNA"/>
</dbReference>
<dbReference type="EMBL" id="AF296825">
    <property type="status" value="NOT_ANNOTATED_CDS"/>
    <property type="molecule type" value="Genomic_DNA"/>
</dbReference>
<dbReference type="EMBL" id="CP002688">
    <property type="protein sequence ID" value="AED92833.1"/>
    <property type="molecule type" value="Genomic_DNA"/>
</dbReference>
<dbReference type="RefSeq" id="NP_197534.1">
    <property type="nucleotide sequence ID" value="NM_122041.2"/>
</dbReference>
<dbReference type="SMR" id="O49353"/>
<dbReference type="FunCoup" id="O49353">
    <property type="interactions" value="23"/>
</dbReference>
<dbReference type="STRING" id="3702.O49353"/>
<dbReference type="CAZy" id="GH17">
    <property type="family name" value="Glycoside Hydrolase Family 17"/>
</dbReference>
<dbReference type="GlyCosmos" id="O49353">
    <property type="glycosylation" value="1 site, No reported glycans"/>
</dbReference>
<dbReference type="GlyGen" id="O49353">
    <property type="glycosylation" value="2 sites"/>
</dbReference>
<dbReference type="PaxDb" id="3702-AT5G20340.1"/>
<dbReference type="ProteomicsDB" id="240824"/>
<dbReference type="EnsemblPlants" id="AT5G20340.1">
    <property type="protein sequence ID" value="AT5G20340.1"/>
    <property type="gene ID" value="AT5G20340"/>
</dbReference>
<dbReference type="GeneID" id="832156"/>
<dbReference type="Gramene" id="AT5G20340.1">
    <property type="protein sequence ID" value="AT5G20340.1"/>
    <property type="gene ID" value="AT5G20340"/>
</dbReference>
<dbReference type="KEGG" id="ath:AT5G20340"/>
<dbReference type="Araport" id="AT5G20340"/>
<dbReference type="TAIR" id="AT5G20340">
    <property type="gene designation" value="BG5"/>
</dbReference>
<dbReference type="eggNOG" id="ENOG502QVKW">
    <property type="taxonomic scope" value="Eukaryota"/>
</dbReference>
<dbReference type="HOGENOM" id="CLU_024953_0_0_1"/>
<dbReference type="InParanoid" id="O49353"/>
<dbReference type="OMA" id="LMASHRM"/>
<dbReference type="PhylomeDB" id="O49353"/>
<dbReference type="BioCyc" id="ARA:AT5G20340-MONOMER"/>
<dbReference type="PRO" id="PR:O49353"/>
<dbReference type="Proteomes" id="UP000006548">
    <property type="component" value="Chromosome 5"/>
</dbReference>
<dbReference type="ExpressionAtlas" id="O49353">
    <property type="expression patterns" value="baseline and differential"/>
</dbReference>
<dbReference type="GO" id="GO:0005576">
    <property type="term" value="C:extracellular region"/>
    <property type="evidence" value="ECO:0007669"/>
    <property type="project" value="UniProtKB-SubCell"/>
</dbReference>
<dbReference type="GO" id="GO:0042973">
    <property type="term" value="F:glucan endo-1,3-beta-D-glucosidase activity"/>
    <property type="evidence" value="ECO:0007669"/>
    <property type="project" value="UniProtKB-EC"/>
</dbReference>
<dbReference type="GO" id="GO:0004338">
    <property type="term" value="F:glucan exo-1,3-beta-glucosidase activity"/>
    <property type="evidence" value="ECO:0000304"/>
    <property type="project" value="TAIR"/>
</dbReference>
<dbReference type="GO" id="GO:0005975">
    <property type="term" value="P:carbohydrate metabolic process"/>
    <property type="evidence" value="ECO:0007669"/>
    <property type="project" value="InterPro"/>
</dbReference>
<dbReference type="GO" id="GO:0006952">
    <property type="term" value="P:defense response"/>
    <property type="evidence" value="ECO:0007669"/>
    <property type="project" value="UniProtKB-KW"/>
</dbReference>
<dbReference type="FunFam" id="3.20.20.80:FF:000010">
    <property type="entry name" value="glucan endo-1,3-beta-glucosidase, basic"/>
    <property type="match status" value="1"/>
</dbReference>
<dbReference type="Gene3D" id="3.20.20.80">
    <property type="entry name" value="Glycosidases"/>
    <property type="match status" value="1"/>
</dbReference>
<dbReference type="InterPro" id="IPR000490">
    <property type="entry name" value="Glyco_hydro_17"/>
</dbReference>
<dbReference type="InterPro" id="IPR044965">
    <property type="entry name" value="Glyco_hydro_17_plant"/>
</dbReference>
<dbReference type="InterPro" id="IPR017853">
    <property type="entry name" value="Glycoside_hydrolase_SF"/>
</dbReference>
<dbReference type="PANTHER" id="PTHR32227">
    <property type="entry name" value="GLUCAN ENDO-1,3-BETA-GLUCOSIDASE BG1-RELATED-RELATED"/>
    <property type="match status" value="1"/>
</dbReference>
<dbReference type="Pfam" id="PF00332">
    <property type="entry name" value="Glyco_hydro_17"/>
    <property type="match status" value="1"/>
</dbReference>
<dbReference type="SUPFAM" id="SSF51445">
    <property type="entry name" value="(Trans)glycosidases"/>
    <property type="match status" value="1"/>
</dbReference>
<dbReference type="PROSITE" id="PS00587">
    <property type="entry name" value="GLYCOSYL_HYDROL_F17"/>
    <property type="match status" value="1"/>
</dbReference>
<comment type="function">
    <text evidence="1">May play a role in plant defense against pathogens.</text>
</comment>
<comment type="catalytic activity">
    <reaction evidence="7">
        <text>Hydrolysis of (1-&gt;3)-beta-D-glucosidic linkages in (1-&gt;3)-beta-D-glucans.</text>
        <dbReference type="EC" id="3.2.1.39"/>
    </reaction>
</comment>
<comment type="subcellular location">
    <subcellularLocation>
        <location evidence="3">Secreted</location>
    </subcellularLocation>
</comment>
<comment type="similarity">
    <text evidence="7">Belongs to the glycosyl hydrolase 17 family.</text>
</comment>
<feature type="signal peptide" evidence="4">
    <location>
        <begin position="1"/>
        <end position="30"/>
    </location>
</feature>
<feature type="chain" id="PRO_0000434699" description="Probable glucan endo-1,3-beta-glucosidase BG5" evidence="4">
    <location>
        <begin position="31"/>
        <end position="354"/>
    </location>
</feature>
<feature type="active site" description="Proton donor" evidence="2">
    <location>
        <position position="137"/>
    </location>
</feature>
<feature type="active site" description="Nucleophile" evidence="2">
    <location>
        <position position="276"/>
    </location>
</feature>
<feature type="glycosylation site" description="N-linked (GlcNAc...) asparagine" evidence="5">
    <location>
        <position position="286"/>
    </location>
</feature>
<reference key="1">
    <citation type="journal article" date="1999" name="Plant Mol. Biol.">
        <title>A novel flower-specific Arabidopsis gene related to both pathogen-induced and developmentally regulated plant beta-1,3-glucanase genes.</title>
        <authorList>
            <person name="Delp G."/>
            <person name="Palva E.T."/>
        </authorList>
    </citation>
    <scope>NUCLEOTIDE SEQUENCE [GENOMIC DNA]</scope>
    <scope>TISSUE SPECIFICITY</scope>
    <source>
        <strain>cv. Columbia</strain>
    </source>
</reference>
<reference key="2">
    <citation type="journal article" date="2000" name="Nature">
        <title>Sequence and analysis of chromosome 5 of the plant Arabidopsis thaliana.</title>
        <authorList>
            <person name="Tabata S."/>
            <person name="Kaneko T."/>
            <person name="Nakamura Y."/>
            <person name="Kotani H."/>
            <person name="Kato T."/>
            <person name="Asamizu E."/>
            <person name="Miyajima N."/>
            <person name="Sasamoto S."/>
            <person name="Kimura T."/>
            <person name="Hosouchi T."/>
            <person name="Kawashima K."/>
            <person name="Kohara M."/>
            <person name="Matsumoto M."/>
            <person name="Matsuno A."/>
            <person name="Muraki A."/>
            <person name="Nakayama S."/>
            <person name="Nakazaki N."/>
            <person name="Naruo K."/>
            <person name="Okumura S."/>
            <person name="Shinpo S."/>
            <person name="Takeuchi C."/>
            <person name="Wada T."/>
            <person name="Watanabe A."/>
            <person name="Yamada M."/>
            <person name="Yasuda M."/>
            <person name="Sato S."/>
            <person name="de la Bastide M."/>
            <person name="Huang E."/>
            <person name="Spiegel L."/>
            <person name="Gnoj L."/>
            <person name="O'Shaughnessy A."/>
            <person name="Preston R."/>
            <person name="Habermann K."/>
            <person name="Murray J."/>
            <person name="Johnson D."/>
            <person name="Rohlfing T."/>
            <person name="Nelson J."/>
            <person name="Stoneking T."/>
            <person name="Pepin K."/>
            <person name="Spieth J."/>
            <person name="Sekhon M."/>
            <person name="Armstrong J."/>
            <person name="Becker M."/>
            <person name="Belter E."/>
            <person name="Cordum H."/>
            <person name="Cordes M."/>
            <person name="Courtney L."/>
            <person name="Courtney W."/>
            <person name="Dante M."/>
            <person name="Du H."/>
            <person name="Edwards J."/>
            <person name="Fryman J."/>
            <person name="Haakensen B."/>
            <person name="Lamar E."/>
            <person name="Latreille P."/>
            <person name="Leonard S."/>
            <person name="Meyer R."/>
            <person name="Mulvaney E."/>
            <person name="Ozersky P."/>
            <person name="Riley A."/>
            <person name="Strowmatt C."/>
            <person name="Wagner-McPherson C."/>
            <person name="Wollam A."/>
            <person name="Yoakum M."/>
            <person name="Bell M."/>
            <person name="Dedhia N."/>
            <person name="Parnell L."/>
            <person name="Shah R."/>
            <person name="Rodriguez M."/>
            <person name="Hoon See L."/>
            <person name="Vil D."/>
            <person name="Baker J."/>
            <person name="Kirchoff K."/>
            <person name="Toth K."/>
            <person name="King L."/>
            <person name="Bahret A."/>
            <person name="Miller B."/>
            <person name="Marra M.A."/>
            <person name="Martienssen R."/>
            <person name="McCombie W.R."/>
            <person name="Wilson R.K."/>
            <person name="Murphy G."/>
            <person name="Bancroft I."/>
            <person name="Volckaert G."/>
            <person name="Wambutt R."/>
            <person name="Duesterhoeft A."/>
            <person name="Stiekema W."/>
            <person name="Pohl T."/>
            <person name="Entian K.-D."/>
            <person name="Terryn N."/>
            <person name="Hartley N."/>
            <person name="Bent E."/>
            <person name="Johnson S."/>
            <person name="Langham S.-A."/>
            <person name="McCullagh B."/>
            <person name="Robben J."/>
            <person name="Grymonprez B."/>
            <person name="Zimmermann W."/>
            <person name="Ramsperger U."/>
            <person name="Wedler H."/>
            <person name="Balke K."/>
            <person name="Wedler E."/>
            <person name="Peters S."/>
            <person name="van Staveren M."/>
            <person name="Dirkse W."/>
            <person name="Mooijman P."/>
            <person name="Klein Lankhorst R."/>
            <person name="Weitzenegger T."/>
            <person name="Bothe G."/>
            <person name="Rose M."/>
            <person name="Hauf J."/>
            <person name="Berneiser S."/>
            <person name="Hempel S."/>
            <person name="Feldpausch M."/>
            <person name="Lamberth S."/>
            <person name="Villarroel R."/>
            <person name="Gielen J."/>
            <person name="Ardiles W."/>
            <person name="Bents O."/>
            <person name="Lemcke K."/>
            <person name="Kolesov G."/>
            <person name="Mayer K.F.X."/>
            <person name="Rudd S."/>
            <person name="Schoof H."/>
            <person name="Schueller C."/>
            <person name="Zaccaria P."/>
            <person name="Mewes H.-W."/>
            <person name="Bevan M."/>
            <person name="Fransz P.F."/>
        </authorList>
    </citation>
    <scope>NUCLEOTIDE SEQUENCE [LARGE SCALE GENOMIC DNA]</scope>
    <source>
        <strain>cv. Columbia</strain>
    </source>
</reference>
<reference key="3">
    <citation type="journal article" date="2017" name="Plant J.">
        <title>Araport11: a complete reannotation of the Arabidopsis thaliana reference genome.</title>
        <authorList>
            <person name="Cheng C.Y."/>
            <person name="Krishnakumar V."/>
            <person name="Chan A.P."/>
            <person name="Thibaud-Nissen F."/>
            <person name="Schobel S."/>
            <person name="Town C.D."/>
        </authorList>
    </citation>
    <scope>GENOME REANNOTATION</scope>
    <source>
        <strain>cv. Columbia</strain>
    </source>
</reference>
<keyword id="KW-0325">Glycoprotein</keyword>
<keyword id="KW-0326">Glycosidase</keyword>
<keyword id="KW-0378">Hydrolase</keyword>
<keyword id="KW-0611">Plant defense</keyword>
<keyword id="KW-1185">Reference proteome</keyword>
<keyword id="KW-0964">Secreted</keyword>
<keyword id="KW-0732">Signal</keyword>
<proteinExistence type="evidence at transcript level"/>
<sequence length="354" mass="38877">MLYLPKKLFLFFFSCIVVIVNYNNSDFVNAANSIGFVNAANSIGLNYGLLGDNLPSPSKVITLYKSIDITKIRIFDPNTEVLNALRGHRDIAVTVGVRDQDLAALSASEEAVKGWFATNIEPYLSDINIAFITVGNEVIPGPIGPQVLPVMQSLTNLVKSRNLPISISTVVAMWNLEQSYPPSAGMFTSQAREQLVPVLKLLSQTNSPILVKIYPYFSYASDPSSIRLDYATFNTEAIVVQDGSLGYSNMFDAIFDAFVWAMEKEGVKDLPMVVSETGWPSAGNGNITTPDIAGTYNRNFVKHIASGKGTPKRPNKGIDGFLFATFNENQKPVGTEQNFGLYNPNDMKPIYNLF</sequence>
<evidence type="ECO:0000250" key="1">
    <source>
        <dbReference type="UniProtKB" id="F4J270"/>
    </source>
</evidence>
<evidence type="ECO:0000250" key="2">
    <source>
        <dbReference type="UniProtKB" id="O22317"/>
    </source>
</evidence>
<evidence type="ECO:0000250" key="3">
    <source>
        <dbReference type="UniProtKB" id="P33157"/>
    </source>
</evidence>
<evidence type="ECO:0000255" key="4"/>
<evidence type="ECO:0000255" key="5">
    <source>
        <dbReference type="PROSITE-ProRule" id="PRU00498"/>
    </source>
</evidence>
<evidence type="ECO:0000303" key="6">
    <source>
    </source>
</evidence>
<evidence type="ECO:0000305" key="7"/>
<evidence type="ECO:0000312" key="8">
    <source>
        <dbReference type="Araport" id="AT5G20340"/>
    </source>
</evidence>
<evidence type="ECO:0000312" key="9">
    <source>
        <dbReference type="EMBL" id="AED92833.1"/>
    </source>
</evidence>
<evidence type="ECO:0000312" key="10">
    <source>
        <dbReference type="EMBL" id="AF296825"/>
    </source>
</evidence>
<organism>
    <name type="scientific">Arabidopsis thaliana</name>
    <name type="common">Mouse-ear cress</name>
    <dbReference type="NCBI Taxonomy" id="3702"/>
    <lineage>
        <taxon>Eukaryota</taxon>
        <taxon>Viridiplantae</taxon>
        <taxon>Streptophyta</taxon>
        <taxon>Embryophyta</taxon>
        <taxon>Tracheophyta</taxon>
        <taxon>Spermatophyta</taxon>
        <taxon>Magnoliopsida</taxon>
        <taxon>eudicotyledons</taxon>
        <taxon>Gunneridae</taxon>
        <taxon>Pentapetalae</taxon>
        <taxon>rosids</taxon>
        <taxon>malvids</taxon>
        <taxon>Brassicales</taxon>
        <taxon>Brassicaceae</taxon>
        <taxon>Camelineae</taxon>
        <taxon>Arabidopsis</taxon>
    </lineage>
</organism>
<accession>O49353</accession>
<gene>
    <name evidence="6" type="primary">BG5</name>
    <name evidence="8 9" type="ordered locus">At5g20340</name>
    <name evidence="10" type="ORF">F5O24.230</name>
</gene>
<protein>
    <recommendedName>
        <fullName evidence="7">Probable glucan endo-1,3-beta-glucosidase BG5</fullName>
        <ecNumber evidence="7">3.2.1.39</ecNumber>
    </recommendedName>
    <alternativeName>
        <fullName evidence="7">Beta-1,3-glucanase 5</fullName>
    </alternativeName>
</protein>